<name>WFDC9_MOUSE</name>
<feature type="signal peptide" evidence="1">
    <location>
        <begin position="1"/>
        <end position="24"/>
    </location>
</feature>
<feature type="chain" id="PRO_0000293712" description="Protein WFDC9">
    <location>
        <begin position="25"/>
        <end position="83"/>
    </location>
</feature>
<comment type="subcellular location">
    <subcellularLocation>
        <location evidence="2">Secreted</location>
    </subcellularLocation>
</comment>
<proteinExistence type="inferred from homology"/>
<keyword id="KW-1185">Reference proteome</keyword>
<keyword id="KW-0964">Secreted</keyword>
<keyword id="KW-0732">Signal</keyword>
<dbReference type="EMBL" id="AK136630">
    <property type="protein sequence ID" value="BAE23078.1"/>
    <property type="molecule type" value="mRNA"/>
</dbReference>
<dbReference type="EMBL" id="AL591478">
    <property type="status" value="NOT_ANNOTATED_CDS"/>
    <property type="molecule type" value="Genomic_DNA"/>
</dbReference>
<dbReference type="CCDS" id="CCDS50796.1"/>
<dbReference type="RefSeq" id="NP_001153886.1">
    <property type="nucleotide sequence ID" value="NM_001160414.2"/>
</dbReference>
<dbReference type="SMR" id="Q3UW41"/>
<dbReference type="STRING" id="10090.ENSMUSP00000104959"/>
<dbReference type="PhosphoSitePlus" id="Q3UW41"/>
<dbReference type="PaxDb" id="10090-ENSMUSP00000104959"/>
<dbReference type="Antibodypedia" id="53788">
    <property type="antibodies" value="25 antibodies from 4 providers"/>
</dbReference>
<dbReference type="Ensembl" id="ENSMUST00000099095.4">
    <property type="protein sequence ID" value="ENSMUSP00000096693.4"/>
    <property type="gene ID" value="ENSMUSG00000074594.10"/>
</dbReference>
<dbReference type="Ensembl" id="ENSMUST00000109335.8">
    <property type="protein sequence ID" value="ENSMUSP00000104959.2"/>
    <property type="gene ID" value="ENSMUSG00000074594.10"/>
</dbReference>
<dbReference type="GeneID" id="629754"/>
<dbReference type="KEGG" id="mmu:629754"/>
<dbReference type="UCSC" id="uc008nvn.2">
    <property type="organism name" value="mouse"/>
</dbReference>
<dbReference type="AGR" id="MGI:3652032"/>
<dbReference type="CTD" id="259240"/>
<dbReference type="MGI" id="MGI:3652032">
    <property type="gene designation" value="Wfdc9"/>
</dbReference>
<dbReference type="VEuPathDB" id="HostDB:ENSMUSG00000074594"/>
<dbReference type="eggNOG" id="ENOG502TGNJ">
    <property type="taxonomic scope" value="Eukaryota"/>
</dbReference>
<dbReference type="GeneTree" id="ENSGT00940000162961"/>
<dbReference type="HOGENOM" id="CLU_191873_0_0_1"/>
<dbReference type="InParanoid" id="Q3UW41"/>
<dbReference type="OMA" id="IEQCWVQ"/>
<dbReference type="OrthoDB" id="9699870at2759"/>
<dbReference type="PhylomeDB" id="Q3UW41"/>
<dbReference type="TreeFam" id="TF338513"/>
<dbReference type="BioGRID-ORCS" id="629754">
    <property type="hits" value="4 hits in 77 CRISPR screens"/>
</dbReference>
<dbReference type="PRO" id="PR:Q3UW41"/>
<dbReference type="Proteomes" id="UP000000589">
    <property type="component" value="Chromosome 2"/>
</dbReference>
<dbReference type="RNAct" id="Q3UW41">
    <property type="molecule type" value="protein"/>
</dbReference>
<dbReference type="Bgee" id="ENSMUSG00000074594">
    <property type="expression patterns" value="Expressed in epiblast cell in embryo and 9 other cell types or tissues"/>
</dbReference>
<dbReference type="GO" id="GO:0005576">
    <property type="term" value="C:extracellular region"/>
    <property type="evidence" value="ECO:0007669"/>
    <property type="project" value="UniProtKB-SubCell"/>
</dbReference>
<sequence>MKPWIIVLTVSAHGILVFLHVLGSLKDDLEEIDQCWVQPPTRFCGKRCTKVRKCVSPNYTCCWTYCGNICLNNEEPFETLMKV</sequence>
<evidence type="ECO:0000255" key="1"/>
<evidence type="ECO:0000305" key="2"/>
<reference key="1">
    <citation type="journal article" date="2005" name="Science">
        <title>The transcriptional landscape of the mammalian genome.</title>
        <authorList>
            <person name="Carninci P."/>
            <person name="Kasukawa T."/>
            <person name="Katayama S."/>
            <person name="Gough J."/>
            <person name="Frith M.C."/>
            <person name="Maeda N."/>
            <person name="Oyama R."/>
            <person name="Ravasi T."/>
            <person name="Lenhard B."/>
            <person name="Wells C."/>
            <person name="Kodzius R."/>
            <person name="Shimokawa K."/>
            <person name="Bajic V.B."/>
            <person name="Brenner S.E."/>
            <person name="Batalov S."/>
            <person name="Forrest A.R."/>
            <person name="Zavolan M."/>
            <person name="Davis M.J."/>
            <person name="Wilming L.G."/>
            <person name="Aidinis V."/>
            <person name="Allen J.E."/>
            <person name="Ambesi-Impiombato A."/>
            <person name="Apweiler R."/>
            <person name="Aturaliya R.N."/>
            <person name="Bailey T.L."/>
            <person name="Bansal M."/>
            <person name="Baxter L."/>
            <person name="Beisel K.W."/>
            <person name="Bersano T."/>
            <person name="Bono H."/>
            <person name="Chalk A.M."/>
            <person name="Chiu K.P."/>
            <person name="Choudhary V."/>
            <person name="Christoffels A."/>
            <person name="Clutterbuck D.R."/>
            <person name="Crowe M.L."/>
            <person name="Dalla E."/>
            <person name="Dalrymple B.P."/>
            <person name="de Bono B."/>
            <person name="Della Gatta G."/>
            <person name="di Bernardo D."/>
            <person name="Down T."/>
            <person name="Engstrom P."/>
            <person name="Fagiolini M."/>
            <person name="Faulkner G."/>
            <person name="Fletcher C.F."/>
            <person name="Fukushima T."/>
            <person name="Furuno M."/>
            <person name="Futaki S."/>
            <person name="Gariboldi M."/>
            <person name="Georgii-Hemming P."/>
            <person name="Gingeras T.R."/>
            <person name="Gojobori T."/>
            <person name="Green R.E."/>
            <person name="Gustincich S."/>
            <person name="Harbers M."/>
            <person name="Hayashi Y."/>
            <person name="Hensch T.K."/>
            <person name="Hirokawa N."/>
            <person name="Hill D."/>
            <person name="Huminiecki L."/>
            <person name="Iacono M."/>
            <person name="Ikeo K."/>
            <person name="Iwama A."/>
            <person name="Ishikawa T."/>
            <person name="Jakt M."/>
            <person name="Kanapin A."/>
            <person name="Katoh M."/>
            <person name="Kawasawa Y."/>
            <person name="Kelso J."/>
            <person name="Kitamura H."/>
            <person name="Kitano H."/>
            <person name="Kollias G."/>
            <person name="Krishnan S.P."/>
            <person name="Kruger A."/>
            <person name="Kummerfeld S.K."/>
            <person name="Kurochkin I.V."/>
            <person name="Lareau L.F."/>
            <person name="Lazarevic D."/>
            <person name="Lipovich L."/>
            <person name="Liu J."/>
            <person name="Liuni S."/>
            <person name="McWilliam S."/>
            <person name="Madan Babu M."/>
            <person name="Madera M."/>
            <person name="Marchionni L."/>
            <person name="Matsuda H."/>
            <person name="Matsuzawa S."/>
            <person name="Miki H."/>
            <person name="Mignone F."/>
            <person name="Miyake S."/>
            <person name="Morris K."/>
            <person name="Mottagui-Tabar S."/>
            <person name="Mulder N."/>
            <person name="Nakano N."/>
            <person name="Nakauchi H."/>
            <person name="Ng P."/>
            <person name="Nilsson R."/>
            <person name="Nishiguchi S."/>
            <person name="Nishikawa S."/>
            <person name="Nori F."/>
            <person name="Ohara O."/>
            <person name="Okazaki Y."/>
            <person name="Orlando V."/>
            <person name="Pang K.C."/>
            <person name="Pavan W.J."/>
            <person name="Pavesi G."/>
            <person name="Pesole G."/>
            <person name="Petrovsky N."/>
            <person name="Piazza S."/>
            <person name="Reed J."/>
            <person name="Reid J.F."/>
            <person name="Ring B.Z."/>
            <person name="Ringwald M."/>
            <person name="Rost B."/>
            <person name="Ruan Y."/>
            <person name="Salzberg S.L."/>
            <person name="Sandelin A."/>
            <person name="Schneider C."/>
            <person name="Schoenbach C."/>
            <person name="Sekiguchi K."/>
            <person name="Semple C.A."/>
            <person name="Seno S."/>
            <person name="Sessa L."/>
            <person name="Sheng Y."/>
            <person name="Shibata Y."/>
            <person name="Shimada H."/>
            <person name="Shimada K."/>
            <person name="Silva D."/>
            <person name="Sinclair B."/>
            <person name="Sperling S."/>
            <person name="Stupka E."/>
            <person name="Sugiura K."/>
            <person name="Sultana R."/>
            <person name="Takenaka Y."/>
            <person name="Taki K."/>
            <person name="Tammoja K."/>
            <person name="Tan S.L."/>
            <person name="Tang S."/>
            <person name="Taylor M.S."/>
            <person name="Tegner J."/>
            <person name="Teichmann S.A."/>
            <person name="Ueda H.R."/>
            <person name="van Nimwegen E."/>
            <person name="Verardo R."/>
            <person name="Wei C.L."/>
            <person name="Yagi K."/>
            <person name="Yamanishi H."/>
            <person name="Zabarovsky E."/>
            <person name="Zhu S."/>
            <person name="Zimmer A."/>
            <person name="Hide W."/>
            <person name="Bult C."/>
            <person name="Grimmond S.M."/>
            <person name="Teasdale R.D."/>
            <person name="Liu E.T."/>
            <person name="Brusic V."/>
            <person name="Quackenbush J."/>
            <person name="Wahlestedt C."/>
            <person name="Mattick J.S."/>
            <person name="Hume D.A."/>
            <person name="Kai C."/>
            <person name="Sasaki D."/>
            <person name="Tomaru Y."/>
            <person name="Fukuda S."/>
            <person name="Kanamori-Katayama M."/>
            <person name="Suzuki M."/>
            <person name="Aoki J."/>
            <person name="Arakawa T."/>
            <person name="Iida J."/>
            <person name="Imamura K."/>
            <person name="Itoh M."/>
            <person name="Kato T."/>
            <person name="Kawaji H."/>
            <person name="Kawagashira N."/>
            <person name="Kawashima T."/>
            <person name="Kojima M."/>
            <person name="Kondo S."/>
            <person name="Konno H."/>
            <person name="Nakano K."/>
            <person name="Ninomiya N."/>
            <person name="Nishio T."/>
            <person name="Okada M."/>
            <person name="Plessy C."/>
            <person name="Shibata K."/>
            <person name="Shiraki T."/>
            <person name="Suzuki S."/>
            <person name="Tagami M."/>
            <person name="Waki K."/>
            <person name="Watahiki A."/>
            <person name="Okamura-Oho Y."/>
            <person name="Suzuki H."/>
            <person name="Kawai J."/>
            <person name="Hayashizaki Y."/>
        </authorList>
    </citation>
    <scope>NUCLEOTIDE SEQUENCE [LARGE SCALE MRNA]</scope>
    <source>
        <strain>C57BL/6J</strain>
        <tissue>Epididymis</tissue>
    </source>
</reference>
<reference key="2">
    <citation type="journal article" date="2009" name="PLoS Biol.">
        <title>Lineage-specific biology revealed by a finished genome assembly of the mouse.</title>
        <authorList>
            <person name="Church D.M."/>
            <person name="Goodstadt L."/>
            <person name="Hillier L.W."/>
            <person name="Zody M.C."/>
            <person name="Goldstein S."/>
            <person name="She X."/>
            <person name="Bult C.J."/>
            <person name="Agarwala R."/>
            <person name="Cherry J.L."/>
            <person name="DiCuccio M."/>
            <person name="Hlavina W."/>
            <person name="Kapustin Y."/>
            <person name="Meric P."/>
            <person name="Maglott D."/>
            <person name="Birtle Z."/>
            <person name="Marques A.C."/>
            <person name="Graves T."/>
            <person name="Zhou S."/>
            <person name="Teague B."/>
            <person name="Potamousis K."/>
            <person name="Churas C."/>
            <person name="Place M."/>
            <person name="Herschleb J."/>
            <person name="Runnheim R."/>
            <person name="Forrest D."/>
            <person name="Amos-Landgraf J."/>
            <person name="Schwartz D.C."/>
            <person name="Cheng Z."/>
            <person name="Lindblad-Toh K."/>
            <person name="Eichler E.E."/>
            <person name="Ponting C.P."/>
        </authorList>
    </citation>
    <scope>NUCLEOTIDE SEQUENCE [LARGE SCALE GENOMIC DNA]</scope>
    <source>
        <strain>C57BL/6J</strain>
    </source>
</reference>
<gene>
    <name type="primary">Wfdc9</name>
</gene>
<accession>Q3UW41</accession>
<protein>
    <recommendedName>
        <fullName>Protein WFDC9</fullName>
    </recommendedName>
</protein>
<organism>
    <name type="scientific">Mus musculus</name>
    <name type="common">Mouse</name>
    <dbReference type="NCBI Taxonomy" id="10090"/>
    <lineage>
        <taxon>Eukaryota</taxon>
        <taxon>Metazoa</taxon>
        <taxon>Chordata</taxon>
        <taxon>Craniata</taxon>
        <taxon>Vertebrata</taxon>
        <taxon>Euteleostomi</taxon>
        <taxon>Mammalia</taxon>
        <taxon>Eutheria</taxon>
        <taxon>Euarchontoglires</taxon>
        <taxon>Glires</taxon>
        <taxon>Rodentia</taxon>
        <taxon>Myomorpha</taxon>
        <taxon>Muroidea</taxon>
        <taxon>Muridae</taxon>
        <taxon>Murinae</taxon>
        <taxon>Mus</taxon>
        <taxon>Mus</taxon>
    </lineage>
</organism>